<dbReference type="EMBL" id="CP000259">
    <property type="protein sequence ID" value="ABF31869.1"/>
    <property type="molecule type" value="Genomic_DNA"/>
</dbReference>
<dbReference type="RefSeq" id="WP_002990260.1">
    <property type="nucleotide sequence ID" value="NC_008021.1"/>
</dbReference>
<dbReference type="SMR" id="Q1JME3"/>
<dbReference type="KEGG" id="spk:MGAS9429_Spy0681"/>
<dbReference type="HOGENOM" id="CLU_140243_2_0_9"/>
<dbReference type="Proteomes" id="UP000002433">
    <property type="component" value="Chromosome"/>
</dbReference>
<dbReference type="Gene3D" id="1.20.1500.10">
    <property type="entry name" value="YheA/YmcA-like"/>
    <property type="match status" value="1"/>
</dbReference>
<dbReference type="HAMAP" id="MF_01526">
    <property type="entry name" value="UPF0342"/>
    <property type="match status" value="1"/>
</dbReference>
<dbReference type="InterPro" id="IPR010368">
    <property type="entry name" value="Com_YlbF"/>
</dbReference>
<dbReference type="InterPro" id="IPR023378">
    <property type="entry name" value="YheA/YmcA-like_dom_sf"/>
</dbReference>
<dbReference type="NCBIfam" id="NF010209">
    <property type="entry name" value="PRK13676.1-1"/>
    <property type="match status" value="1"/>
</dbReference>
<dbReference type="Pfam" id="PF06133">
    <property type="entry name" value="Com_YlbF"/>
    <property type="match status" value="1"/>
</dbReference>
<dbReference type="SUPFAM" id="SSF158622">
    <property type="entry name" value="YheA/YmcA-like"/>
    <property type="match status" value="1"/>
</dbReference>
<protein>
    <recommendedName>
        <fullName evidence="1">UPF0342 protein MGAS9429_Spy0681</fullName>
    </recommendedName>
</protein>
<feature type="chain" id="PRO_0000292748" description="UPF0342 protein MGAS9429_Spy0681">
    <location>
        <begin position="1"/>
        <end position="113"/>
    </location>
</feature>
<sequence length="113" mass="12900">MSQEIYDYANQLERAVRALPEYQKVLEVKEAIQADASASELFDEFVAMQEKIQGMMQSGQMPTAEEQTSIQELSQKIEANDQLKAYFEAQQALSVYMSDIERIVFAPLKDLVK</sequence>
<evidence type="ECO:0000255" key="1">
    <source>
        <dbReference type="HAMAP-Rule" id="MF_01526"/>
    </source>
</evidence>
<proteinExistence type="inferred from homology"/>
<organism>
    <name type="scientific">Streptococcus pyogenes serotype M12 (strain MGAS9429)</name>
    <dbReference type="NCBI Taxonomy" id="370551"/>
    <lineage>
        <taxon>Bacteria</taxon>
        <taxon>Bacillati</taxon>
        <taxon>Bacillota</taxon>
        <taxon>Bacilli</taxon>
        <taxon>Lactobacillales</taxon>
        <taxon>Streptococcaceae</taxon>
        <taxon>Streptococcus</taxon>
    </lineage>
</organism>
<gene>
    <name type="ordered locus">MGAS9429_Spy0681</name>
</gene>
<name>Y681_STRPC</name>
<reference key="1">
    <citation type="journal article" date="2006" name="Proc. Natl. Acad. Sci. U.S.A.">
        <title>Molecular genetic anatomy of inter- and intraserotype variation in the human bacterial pathogen group A Streptococcus.</title>
        <authorList>
            <person name="Beres S.B."/>
            <person name="Richter E.W."/>
            <person name="Nagiec M.J."/>
            <person name="Sumby P."/>
            <person name="Porcella S.F."/>
            <person name="DeLeo F.R."/>
            <person name="Musser J.M."/>
        </authorList>
    </citation>
    <scope>NUCLEOTIDE SEQUENCE [LARGE SCALE GENOMIC DNA]</scope>
    <source>
        <strain>MGAS9429</strain>
    </source>
</reference>
<comment type="similarity">
    <text evidence="1">Belongs to the UPF0342 family.</text>
</comment>
<accession>Q1JME3</accession>